<comment type="function">
    <text>Receptor that may play a role in the perception of bitterness and is gustducin-linked. May play a role in sensing the chemical composition of the gastrointestinal content. The activity of this receptor may stimulate alpha gustducin, mediate PLC-beta-2 activation and lead to the gating of TRPM5.</text>
</comment>
<comment type="subcellular location">
    <subcellularLocation>
        <location>Membrane</location>
        <topology>Multi-pass membrane protein</topology>
    </subcellularLocation>
</comment>
<comment type="tissue specificity">
    <text>Expressed in subsets of taste receptor cells of the tongue and palate epithelium and exclusively in gustducin-positive cells.</text>
</comment>
<comment type="miscellaneous">
    <text>Most taste cells may be activated by a limited number of bitter compounds; individual taste cells can discriminate among bitter stimuli.</text>
</comment>
<comment type="similarity">
    <text evidence="4">Belongs to the G-protein coupled receptor T2R family.</text>
</comment>
<keyword id="KW-0297">G-protein coupled receptor</keyword>
<keyword id="KW-0325">Glycoprotein</keyword>
<keyword id="KW-0472">Membrane</keyword>
<keyword id="KW-0675">Receptor</keyword>
<keyword id="KW-1185">Reference proteome</keyword>
<keyword id="KW-0716">Sensory transduction</keyword>
<keyword id="KW-0919">Taste</keyword>
<keyword id="KW-0807">Transducer</keyword>
<keyword id="KW-0812">Transmembrane</keyword>
<keyword id="KW-1133">Transmembrane helix</keyword>
<organism>
    <name type="scientific">Homo sapiens</name>
    <name type="common">Human</name>
    <dbReference type="NCBI Taxonomy" id="9606"/>
    <lineage>
        <taxon>Eukaryota</taxon>
        <taxon>Metazoa</taxon>
        <taxon>Chordata</taxon>
        <taxon>Craniata</taxon>
        <taxon>Vertebrata</taxon>
        <taxon>Euteleostomi</taxon>
        <taxon>Mammalia</taxon>
        <taxon>Eutheria</taxon>
        <taxon>Euarchontoglires</taxon>
        <taxon>Primates</taxon>
        <taxon>Haplorrhini</taxon>
        <taxon>Catarrhini</taxon>
        <taxon>Hominidae</taxon>
        <taxon>Homo</taxon>
    </lineage>
</organism>
<reference key="1">
    <citation type="journal article" date="2000" name="Cell">
        <title>A novel family of mammalian taste receptors.</title>
        <authorList>
            <person name="Adler E."/>
            <person name="Hoon M.A."/>
            <person name="Mueller K.L."/>
            <person name="Chandrashekar J."/>
            <person name="Ryba N.J.P."/>
            <person name="Zuker C.S."/>
        </authorList>
    </citation>
    <scope>NUCLEOTIDE SEQUENCE [GENOMIC DNA]</scope>
    <scope>TOPOLOGY</scope>
</reference>
<reference key="2">
    <citation type="journal article" date="2005" name="Mol. Biol. Evol.">
        <title>Evolution of bitter taste receptors in humans and apes.</title>
        <authorList>
            <person name="Fischer A."/>
            <person name="Gilad Y."/>
            <person name="Man O."/>
            <person name="Paeaebo S."/>
        </authorList>
    </citation>
    <scope>NUCLEOTIDE SEQUENCE [GENOMIC DNA]</scope>
</reference>
<reference key="3">
    <citation type="journal article" date="2004" name="Genome Res.">
        <title>The status, quality, and expansion of the NIH full-length cDNA project: the Mammalian Gene Collection (MGC).</title>
        <authorList>
            <consortium name="The MGC Project Team"/>
        </authorList>
    </citation>
    <scope>NUCLEOTIDE SEQUENCE [LARGE SCALE MRNA]</scope>
    <scope>VARIANT SER-259</scope>
</reference>
<reference key="4">
    <citation type="journal article" date="2000" name="Cell">
        <title>T2Rs function as bitter taste receptors.</title>
        <authorList>
            <person name="Chandrashekar J."/>
            <person name="Mueller K.L."/>
            <person name="Hoon M.A."/>
            <person name="Adler E."/>
            <person name="Feng L."/>
            <person name="Guo W."/>
            <person name="Zuker C.S."/>
            <person name="Ryba N.J.P."/>
        </authorList>
    </citation>
    <scope>CHARACTERIZATION</scope>
</reference>
<reference key="5">
    <citation type="journal article" date="2002" name="Curr. Opin. Neurobiol.">
        <title>Receptors for bitter and sweet taste.</title>
        <authorList>
            <person name="Montmayeur J.-P."/>
            <person name="Matsunami H."/>
        </authorList>
    </citation>
    <scope>REVIEW</scope>
</reference>
<reference key="6">
    <citation type="journal article" date="2002" name="J. Biol. Chem.">
        <title>Molecular mechanisms of bitter and sweet taste transduction.</title>
        <authorList>
            <person name="Margolskee R.F."/>
        </authorList>
    </citation>
    <scope>REVIEW</scope>
</reference>
<reference key="7">
    <citation type="journal article" date="2003" name="Cell">
        <title>Coding of sweet, bitter, and umami tastes: different receptor cells sharing similar signaling pathways.</title>
        <authorList>
            <person name="Zhang Y."/>
            <person name="Hoon M.A."/>
            <person name="Chandrashekar J."/>
            <person name="Mueller K.L."/>
            <person name="Cook B."/>
            <person name="Wu D."/>
            <person name="Zuker C.S."/>
            <person name="Ryba N.J."/>
        </authorList>
    </citation>
    <scope>REVIEW</scope>
</reference>
<reference key="8">
    <citation type="journal article" date="2006" name="Science">
        <title>The consensus coding sequences of human breast and colorectal cancers.</title>
        <authorList>
            <person name="Sjoeblom T."/>
            <person name="Jones S."/>
            <person name="Wood L.D."/>
            <person name="Parsons D.W."/>
            <person name="Lin J."/>
            <person name="Barber T.D."/>
            <person name="Mandelker D."/>
            <person name="Leary R.J."/>
            <person name="Ptak J."/>
            <person name="Silliman N."/>
            <person name="Szabo S."/>
            <person name="Buckhaults P."/>
            <person name="Farrell C."/>
            <person name="Meeh P."/>
            <person name="Markowitz S.D."/>
            <person name="Willis J."/>
            <person name="Dawson D."/>
            <person name="Willson J.K.V."/>
            <person name="Gazdar A.F."/>
            <person name="Hartigan J."/>
            <person name="Wu L."/>
            <person name="Liu C."/>
            <person name="Parmigiani G."/>
            <person name="Park B.H."/>
            <person name="Bachman K.E."/>
            <person name="Papadopoulos N."/>
            <person name="Vogelstein B."/>
            <person name="Kinzler K.W."/>
            <person name="Velculescu V.E."/>
        </authorList>
    </citation>
    <scope>VARIANT [LARGE SCALE ANALYSIS] SER-149</scope>
</reference>
<protein>
    <recommendedName>
        <fullName>Taste receptor type 2 member 13</fullName>
        <shortName>T2R13</shortName>
    </recommendedName>
    <alternativeName>
        <fullName>Taste receptor family B member 3</fullName>
        <shortName>TRB3</shortName>
    </alternativeName>
</protein>
<gene>
    <name type="primary">TAS2R13</name>
</gene>
<evidence type="ECO:0000255" key="1"/>
<evidence type="ECO:0000269" key="2">
    <source>
    </source>
</evidence>
<evidence type="ECO:0000269" key="3">
    <source>
    </source>
</evidence>
<evidence type="ECO:0000305" key="4"/>
<accession>Q9NYV9</accession>
<accession>Q4G0I5</accession>
<accession>Q502V8</accession>
<accession>Q645X2</accession>
<feature type="chain" id="PRO_0000082247" description="Taste receptor type 2 member 13">
    <location>
        <begin position="1"/>
        <end position="303"/>
    </location>
</feature>
<feature type="topological domain" description="Extracellular" evidence="1">
    <location>
        <begin position="1"/>
        <end position="7"/>
    </location>
</feature>
<feature type="transmembrane region" description="Helical; Name=1" evidence="1">
    <location>
        <begin position="8"/>
        <end position="28"/>
    </location>
</feature>
<feature type="topological domain" description="Cytoplasmic" evidence="1">
    <location>
        <begin position="29"/>
        <end position="55"/>
    </location>
</feature>
<feature type="transmembrane region" description="Helical; Name=2" evidence="1">
    <location>
        <begin position="56"/>
        <end position="76"/>
    </location>
</feature>
<feature type="topological domain" description="Extracellular" evidence="1">
    <location>
        <begin position="77"/>
        <end position="85"/>
    </location>
</feature>
<feature type="transmembrane region" description="Helical; Name=3" evidence="1">
    <location>
        <begin position="86"/>
        <end position="106"/>
    </location>
</feature>
<feature type="topological domain" description="Cytoplasmic" evidence="1">
    <location>
        <begin position="107"/>
        <end position="128"/>
    </location>
</feature>
<feature type="transmembrane region" description="Helical; Name=4" evidence="1">
    <location>
        <begin position="129"/>
        <end position="149"/>
    </location>
</feature>
<feature type="topological domain" description="Extracellular" evidence="1">
    <location>
        <begin position="150"/>
        <end position="184"/>
    </location>
</feature>
<feature type="transmembrane region" description="Helical; Name=5" evidence="1">
    <location>
        <begin position="185"/>
        <end position="205"/>
    </location>
</feature>
<feature type="topological domain" description="Cytoplasmic" evidence="1">
    <location>
        <begin position="206"/>
        <end position="232"/>
    </location>
</feature>
<feature type="transmembrane region" description="Helical; Name=6" evidence="1">
    <location>
        <begin position="233"/>
        <end position="253"/>
    </location>
</feature>
<feature type="topological domain" description="Extracellular" evidence="1">
    <location>
        <begin position="254"/>
        <end position="261"/>
    </location>
</feature>
<feature type="transmembrane region" description="Helical; Name=7" evidence="1">
    <location>
        <begin position="262"/>
        <end position="282"/>
    </location>
</feature>
<feature type="topological domain" description="Cytoplasmic" evidence="1">
    <location>
        <begin position="283"/>
        <end position="303"/>
    </location>
</feature>
<feature type="glycosylation site" description="N-linked (GlcNAc...) asparagine" evidence="1">
    <location>
        <position position="162"/>
    </location>
</feature>
<feature type="glycosylation site" description="N-linked (GlcNAc...) asparagine" evidence="1">
    <location>
        <position position="166"/>
    </location>
</feature>
<feature type="sequence variant" id="VAR_036432" description="In a breast cancer sample; somatic mutation." evidence="3">
    <original>N</original>
    <variation>S</variation>
    <location>
        <position position="149"/>
    </location>
</feature>
<feature type="sequence variant" id="VAR_021853" description="In dbSNP:rs1015443." evidence="2">
    <original>N</original>
    <variation>S</variation>
    <location>
        <position position="259"/>
    </location>
</feature>
<proteinExistence type="evidence at protein level"/>
<name>T2R13_HUMAN</name>
<sequence length="303" mass="35118">MESALPSIFTLVIIAEFIIGNLSNGFIVLINCIDWVSKRELSSVDKLLIILAISRIGLIWEILVSWFLALHYLAIFVSGTGLRIMIFSWIVSNHFNLWLATIFSIFYLLKIASFSSPAFLYLKWRVNKVILMILLGTLVFLFLNLIQINMHIKDWLDRYERNTTWNFSMSDFETFSVSVKFTMTMFSLTPFTVAFISFLLLIFSLQKHLQKMQLNYKGHRDPRTKVHTNALKIVISFLLFYASFFLCVLISWISELYQNTVIYMLCETIGVFSPSSHSFLLILGNAKLRQAFLLVAAKVWAKR</sequence>
<dbReference type="EMBL" id="AF227137">
    <property type="protein sequence ID" value="AAF43910.1"/>
    <property type="molecule type" value="Genomic_DNA"/>
</dbReference>
<dbReference type="EMBL" id="AY724945">
    <property type="protein sequence ID" value="AAU21147.1"/>
    <property type="molecule type" value="Genomic_DNA"/>
</dbReference>
<dbReference type="EMBL" id="BC069376">
    <property type="protein sequence ID" value="AAH69376.1"/>
    <property type="molecule type" value="mRNA"/>
</dbReference>
<dbReference type="EMBL" id="BC095518">
    <property type="protein sequence ID" value="AAH95518.1"/>
    <property type="molecule type" value="mRNA"/>
</dbReference>
<dbReference type="CCDS" id="CCDS8635.1"/>
<dbReference type="RefSeq" id="NP_076409.1">
    <property type="nucleotide sequence ID" value="NM_023920.2"/>
</dbReference>
<dbReference type="SMR" id="Q9NYV9"/>
<dbReference type="BioGRID" id="119148">
    <property type="interactions" value="2"/>
</dbReference>
<dbReference type="FunCoup" id="Q9NYV9">
    <property type="interactions" value="208"/>
</dbReference>
<dbReference type="STRING" id="9606.ENSP00000375095"/>
<dbReference type="ChEMBL" id="CHEMBL4523471"/>
<dbReference type="DrugCentral" id="Q9NYV9"/>
<dbReference type="GlyCosmos" id="Q9NYV9">
    <property type="glycosylation" value="2 sites, No reported glycans"/>
</dbReference>
<dbReference type="GlyGen" id="Q9NYV9">
    <property type="glycosylation" value="2 sites"/>
</dbReference>
<dbReference type="iPTMnet" id="Q9NYV9"/>
<dbReference type="PhosphoSitePlus" id="Q9NYV9"/>
<dbReference type="BioMuta" id="TAS2R13"/>
<dbReference type="DMDM" id="29839659"/>
<dbReference type="MassIVE" id="Q9NYV9"/>
<dbReference type="PaxDb" id="9606-ENSP00000375095"/>
<dbReference type="Antibodypedia" id="23407">
    <property type="antibodies" value="134 antibodies from 21 providers"/>
</dbReference>
<dbReference type="DNASU" id="50838"/>
<dbReference type="Ensembl" id="ENST00000390677.2">
    <property type="protein sequence ID" value="ENSP00000375095.2"/>
    <property type="gene ID" value="ENSG00000212128.2"/>
</dbReference>
<dbReference type="Ensembl" id="ENST00000574870.1">
    <property type="protein sequence ID" value="ENSP00000461365.1"/>
    <property type="gene ID" value="ENSG00000273457.1"/>
</dbReference>
<dbReference type="Ensembl" id="ENST00000613662.1">
    <property type="protein sequence ID" value="ENSP00000478277.1"/>
    <property type="gene ID" value="ENSG00000277254.1"/>
</dbReference>
<dbReference type="GeneID" id="50838"/>
<dbReference type="KEGG" id="hsa:50838"/>
<dbReference type="MANE-Select" id="ENST00000390677.2">
    <property type="protein sequence ID" value="ENSP00000375095.2"/>
    <property type="RefSeq nucleotide sequence ID" value="NM_023920.2"/>
    <property type="RefSeq protein sequence ID" value="NP_076409.1"/>
</dbReference>
<dbReference type="UCSC" id="uc001qzg.1">
    <property type="organism name" value="human"/>
</dbReference>
<dbReference type="AGR" id="HGNC:14919"/>
<dbReference type="CTD" id="50838"/>
<dbReference type="DisGeNET" id="50838"/>
<dbReference type="GeneCards" id="TAS2R13"/>
<dbReference type="HGNC" id="HGNC:14919">
    <property type="gene designation" value="TAS2R13"/>
</dbReference>
<dbReference type="HPA" id="ENSG00000212128">
    <property type="expression patterns" value="Not detected"/>
</dbReference>
<dbReference type="MIM" id="604792">
    <property type="type" value="gene"/>
</dbReference>
<dbReference type="neXtProt" id="NX_Q9NYV9"/>
<dbReference type="OpenTargets" id="ENSG00000212128"/>
<dbReference type="PharmGKB" id="PA37929"/>
<dbReference type="VEuPathDB" id="HostDB:ENSG00000212128"/>
<dbReference type="eggNOG" id="ENOG502TE6X">
    <property type="taxonomic scope" value="Eukaryota"/>
</dbReference>
<dbReference type="GeneTree" id="ENSGT01100000263477"/>
<dbReference type="HOGENOM" id="CLU_072337_2_0_1"/>
<dbReference type="InParanoid" id="Q9NYV9"/>
<dbReference type="OMA" id="KMQLNYK"/>
<dbReference type="OrthoDB" id="8876749at2759"/>
<dbReference type="PAN-GO" id="Q9NYV9">
    <property type="GO annotations" value="3 GO annotations based on evolutionary models"/>
</dbReference>
<dbReference type="PhylomeDB" id="Q9NYV9"/>
<dbReference type="TreeFam" id="TF335891"/>
<dbReference type="PathwayCommons" id="Q9NYV9"/>
<dbReference type="Reactome" id="R-HSA-418594">
    <property type="pathway name" value="G alpha (i) signalling events"/>
</dbReference>
<dbReference type="Reactome" id="R-HSA-420499">
    <property type="pathway name" value="Class C/3 (Metabotropic glutamate/pheromone receptors)"/>
</dbReference>
<dbReference type="Reactome" id="R-HSA-9717207">
    <property type="pathway name" value="Sensory perception of sweet, bitter, and umami (glutamate) taste"/>
</dbReference>
<dbReference type="BioGRID-ORCS" id="50838">
    <property type="hits" value="14 hits in 1138 CRISPR screens"/>
</dbReference>
<dbReference type="GeneWiki" id="TAS2R13"/>
<dbReference type="GenomeRNAi" id="50838"/>
<dbReference type="Pharos" id="Q9NYV9">
    <property type="development level" value="Tchem"/>
</dbReference>
<dbReference type="PRO" id="PR:Q9NYV9"/>
<dbReference type="Proteomes" id="UP000005640">
    <property type="component" value="Chromosome 12"/>
</dbReference>
<dbReference type="RNAct" id="Q9NYV9">
    <property type="molecule type" value="protein"/>
</dbReference>
<dbReference type="Bgee" id="ENSG00000212128">
    <property type="expression patterns" value="Expressed in male germ line stem cell (sensu Vertebrata) in testis and 20 other cell types or tissues"/>
</dbReference>
<dbReference type="GO" id="GO:0016020">
    <property type="term" value="C:membrane"/>
    <property type="evidence" value="ECO:0000318"/>
    <property type="project" value="GO_Central"/>
</dbReference>
<dbReference type="GO" id="GO:0005886">
    <property type="term" value="C:plasma membrane"/>
    <property type="evidence" value="ECO:0000304"/>
    <property type="project" value="Reactome"/>
</dbReference>
<dbReference type="GO" id="GO:0033038">
    <property type="term" value="F:bitter taste receptor activity"/>
    <property type="evidence" value="ECO:0000314"/>
    <property type="project" value="UniProtKB"/>
</dbReference>
<dbReference type="GO" id="GO:0004930">
    <property type="term" value="F:G protein-coupled receptor activity"/>
    <property type="evidence" value="ECO:0007669"/>
    <property type="project" value="UniProtKB-KW"/>
</dbReference>
<dbReference type="GO" id="GO:0008527">
    <property type="term" value="F:taste receptor activity"/>
    <property type="evidence" value="ECO:0000304"/>
    <property type="project" value="UniProtKB"/>
</dbReference>
<dbReference type="GO" id="GO:0001580">
    <property type="term" value="P:detection of chemical stimulus involved in sensory perception of bitter taste"/>
    <property type="evidence" value="ECO:0000314"/>
    <property type="project" value="UniProtKB"/>
</dbReference>
<dbReference type="GO" id="GO:0032467">
    <property type="term" value="P:positive regulation of cytokinesis"/>
    <property type="evidence" value="ECO:0000315"/>
    <property type="project" value="UniProtKB"/>
</dbReference>
<dbReference type="CDD" id="cd15026">
    <property type="entry name" value="7tm_TAS2R13"/>
    <property type="match status" value="1"/>
</dbReference>
<dbReference type="FunFam" id="1.20.1070.10:FF:000042">
    <property type="entry name" value="Taste receptor type 2 member 7"/>
    <property type="match status" value="1"/>
</dbReference>
<dbReference type="Gene3D" id="1.20.1070.10">
    <property type="entry name" value="Rhodopsin 7-helix transmembrane proteins"/>
    <property type="match status" value="1"/>
</dbReference>
<dbReference type="InterPro" id="IPR007960">
    <property type="entry name" value="TAS2R"/>
</dbReference>
<dbReference type="PANTHER" id="PTHR11394">
    <property type="entry name" value="TASTE RECEPTOR TYPE 2"/>
    <property type="match status" value="1"/>
</dbReference>
<dbReference type="PANTHER" id="PTHR11394:SF28">
    <property type="entry name" value="TASTE RECEPTOR TYPE 2 MEMBER 13"/>
    <property type="match status" value="1"/>
</dbReference>
<dbReference type="Pfam" id="PF05296">
    <property type="entry name" value="TAS2R"/>
    <property type="match status" value="1"/>
</dbReference>
<dbReference type="SUPFAM" id="SSF81321">
    <property type="entry name" value="Family A G protein-coupled receptor-like"/>
    <property type="match status" value="1"/>
</dbReference>